<gene>
    <name type="primary">lin52</name>
    <name type="ORF">zgc:153771</name>
</gene>
<dbReference type="EMBL" id="BC124731">
    <property type="protein sequence ID" value="AAI24732.1"/>
    <property type="molecule type" value="mRNA"/>
</dbReference>
<dbReference type="RefSeq" id="NP_001071264.1">
    <property type="nucleotide sequence ID" value="NM_001077796.1"/>
</dbReference>
<dbReference type="SMR" id="A0AUQ6"/>
<dbReference type="FunCoup" id="A0AUQ6">
    <property type="interactions" value="565"/>
</dbReference>
<dbReference type="STRING" id="7955.ENSDARP00000114392"/>
<dbReference type="PaxDb" id="7955-ENSDARP00000095107"/>
<dbReference type="PeptideAtlas" id="A0AUQ6"/>
<dbReference type="Ensembl" id="ENSDART00000143090">
    <property type="protein sequence ID" value="ENSDARP00000114392"/>
    <property type="gene ID" value="ENSDARG00000070833"/>
</dbReference>
<dbReference type="GeneID" id="777755"/>
<dbReference type="KEGG" id="dre:777755"/>
<dbReference type="AGR" id="ZFIN:ZDB-GENE-061110-82"/>
<dbReference type="CTD" id="91750"/>
<dbReference type="ZFIN" id="ZDB-GENE-061110-82">
    <property type="gene designation" value="lin52"/>
</dbReference>
<dbReference type="eggNOG" id="KOG4402">
    <property type="taxonomic scope" value="Eukaryota"/>
</dbReference>
<dbReference type="HOGENOM" id="CLU_143062_1_0_1"/>
<dbReference type="InParanoid" id="A0AUQ6"/>
<dbReference type="OMA" id="NVQNTAY"/>
<dbReference type="OrthoDB" id="5834362at2759"/>
<dbReference type="PhylomeDB" id="A0AUQ6"/>
<dbReference type="TreeFam" id="TF320091"/>
<dbReference type="Reactome" id="R-DRE-1538133">
    <property type="pathway name" value="G0 and Early G1"/>
</dbReference>
<dbReference type="PRO" id="PR:A0AUQ6"/>
<dbReference type="Proteomes" id="UP000000437">
    <property type="component" value="Chromosome 17"/>
</dbReference>
<dbReference type="Bgee" id="ENSDARG00000070833">
    <property type="expression patterns" value="Expressed in testis and 26 other cell types or tissues"/>
</dbReference>
<dbReference type="ExpressionAtlas" id="A0AUQ6">
    <property type="expression patterns" value="baseline"/>
</dbReference>
<dbReference type="GO" id="GO:0070176">
    <property type="term" value="C:DRM complex"/>
    <property type="evidence" value="ECO:0007669"/>
    <property type="project" value="InterPro"/>
</dbReference>
<dbReference type="GO" id="GO:0006355">
    <property type="term" value="P:regulation of DNA-templated transcription"/>
    <property type="evidence" value="ECO:0007669"/>
    <property type="project" value="InterPro"/>
</dbReference>
<dbReference type="InterPro" id="IPR018737">
    <property type="entry name" value="DREAM_LIN52"/>
</dbReference>
<dbReference type="PANTHER" id="PTHR31489">
    <property type="entry name" value="LIN52 FAMILY MEMBER"/>
    <property type="match status" value="1"/>
</dbReference>
<dbReference type="PANTHER" id="PTHR31489:SF2">
    <property type="entry name" value="PROTEIN LIN-52 HOMOLOG"/>
    <property type="match status" value="1"/>
</dbReference>
<dbReference type="Pfam" id="PF10044">
    <property type="entry name" value="LIN52"/>
    <property type="match status" value="1"/>
</dbReference>
<proteinExistence type="inferred from homology"/>
<organism>
    <name type="scientific">Danio rerio</name>
    <name type="common">Zebrafish</name>
    <name type="synonym">Brachydanio rerio</name>
    <dbReference type="NCBI Taxonomy" id="7955"/>
    <lineage>
        <taxon>Eukaryota</taxon>
        <taxon>Metazoa</taxon>
        <taxon>Chordata</taxon>
        <taxon>Craniata</taxon>
        <taxon>Vertebrata</taxon>
        <taxon>Euteleostomi</taxon>
        <taxon>Actinopterygii</taxon>
        <taxon>Neopterygii</taxon>
        <taxon>Teleostei</taxon>
        <taxon>Ostariophysi</taxon>
        <taxon>Cypriniformes</taxon>
        <taxon>Danionidae</taxon>
        <taxon>Danioninae</taxon>
        <taxon>Danio</taxon>
    </lineage>
</organism>
<sequence length="112" mass="12526">MASPNGGEDFESSLISLENLDRASPDLWPEQLPGVSEFAASFKNPITNSPPKWMAELESEDIEMLKELGSLTTANLMEKVKGLQNLAYQLGLEESREMTRGKFLNILERPKK</sequence>
<feature type="chain" id="PRO_0000273498" description="Protein lin-52 homolog">
    <location>
        <begin position="1"/>
        <end position="112"/>
    </location>
</feature>
<evidence type="ECO:0000250" key="1"/>
<evidence type="ECO:0000305" key="2"/>
<keyword id="KW-1185">Reference proteome</keyword>
<accession>A0AUQ6</accession>
<protein>
    <recommendedName>
        <fullName>Protein lin-52 homolog</fullName>
    </recommendedName>
</protein>
<reference key="1">
    <citation type="submission" date="2006-10" db="EMBL/GenBank/DDBJ databases">
        <authorList>
            <consortium name="NIH - Zebrafish Gene Collection (ZGC) project"/>
        </authorList>
    </citation>
    <scope>NUCLEOTIDE SEQUENCE [LARGE SCALE MRNA]</scope>
    <source>
        <tissue>Olfactory epithelium</tissue>
    </source>
</reference>
<comment type="subunit">
    <text evidence="1">Component of the DREAM complex.</text>
</comment>
<comment type="similarity">
    <text evidence="2">Belongs to the lin-52 family.</text>
</comment>
<name>LIN52_DANRE</name>